<organism>
    <name type="scientific">Bacillus subtilis (strain 168)</name>
    <dbReference type="NCBI Taxonomy" id="224308"/>
    <lineage>
        <taxon>Bacteria</taxon>
        <taxon>Bacillati</taxon>
        <taxon>Bacillota</taxon>
        <taxon>Bacilli</taxon>
        <taxon>Bacillales</taxon>
        <taxon>Bacillaceae</taxon>
        <taxon>Bacillus</taxon>
    </lineage>
</organism>
<sequence>MNLIGYIEERFQNLELIPSIYNQWGTGIHFCLGENIYQLKANEELNLKMFRIVYEQTSIIFNELFEQNDDIFLVTNMYKHKKKEKCIRKLKVYQPFLKCKNHLNQIMVKTYPYPFEINKAEEYEMQQFSLLCKPRDLRVTELLKAASNEDFPQKPKFGGYSIDYPDVFFVNITKDIIFFIYDDRGCEVIAHDFKRIRPLYEKYHDWVEEYKCM</sequence>
<name>YNAE_BACSU</name>
<dbReference type="EMBL" id="U66480">
    <property type="protein sequence ID" value="AAB41085.1"/>
    <property type="molecule type" value="Genomic_DNA"/>
</dbReference>
<dbReference type="EMBL" id="AL009126">
    <property type="protein sequence ID" value="CAB13637.1"/>
    <property type="molecule type" value="Genomic_DNA"/>
</dbReference>
<dbReference type="PIR" id="E69887">
    <property type="entry name" value="E69887"/>
</dbReference>
<dbReference type="RefSeq" id="NP_389635.1">
    <property type="nucleotide sequence ID" value="NC_000964.3"/>
</dbReference>
<dbReference type="RefSeq" id="WP_003245299.1">
    <property type="nucleotide sequence ID" value="NZ_OZ025638.1"/>
</dbReference>
<dbReference type="FunCoup" id="P94483">
    <property type="interactions" value="38"/>
</dbReference>
<dbReference type="STRING" id="224308.BSU17530"/>
<dbReference type="PaxDb" id="224308-BSU17530"/>
<dbReference type="EnsemblBacteria" id="CAB13637">
    <property type="protein sequence ID" value="CAB13637"/>
    <property type="gene ID" value="BSU_17530"/>
</dbReference>
<dbReference type="GeneID" id="936948"/>
<dbReference type="KEGG" id="bsu:BSU17530"/>
<dbReference type="PATRIC" id="fig|224308.179.peg.1902"/>
<dbReference type="eggNOG" id="ENOG502ZC9V">
    <property type="taxonomic scope" value="Bacteria"/>
</dbReference>
<dbReference type="InParanoid" id="P94483"/>
<dbReference type="OrthoDB" id="72213at2"/>
<dbReference type="BioCyc" id="BSUB:BSU17530-MONOMER"/>
<dbReference type="Proteomes" id="UP000001570">
    <property type="component" value="Chromosome"/>
</dbReference>
<dbReference type="InterPro" id="IPR024976">
    <property type="entry name" value="DUF3885"/>
</dbReference>
<dbReference type="Pfam" id="PF13021">
    <property type="entry name" value="DUF3885"/>
    <property type="match status" value="1"/>
</dbReference>
<reference key="1">
    <citation type="submission" date="1996-08" db="EMBL/GenBank/DDBJ databases">
        <title>Sequencing of a 26 kb region of the Bacillus subtilis genome downstream of spoVJ.</title>
        <authorList>
            <person name="Borchert S."/>
            <person name="Klein C."/>
            <person name="Piksa B."/>
            <person name="Hammelmann M."/>
            <person name="Entian K.-D."/>
        </authorList>
    </citation>
    <scope>NUCLEOTIDE SEQUENCE [GENOMIC DNA]</scope>
</reference>
<reference key="2">
    <citation type="journal article" date="1997" name="Nature">
        <title>The complete genome sequence of the Gram-positive bacterium Bacillus subtilis.</title>
        <authorList>
            <person name="Kunst F."/>
            <person name="Ogasawara N."/>
            <person name="Moszer I."/>
            <person name="Albertini A.M."/>
            <person name="Alloni G."/>
            <person name="Azevedo V."/>
            <person name="Bertero M.G."/>
            <person name="Bessieres P."/>
            <person name="Bolotin A."/>
            <person name="Borchert S."/>
            <person name="Borriss R."/>
            <person name="Boursier L."/>
            <person name="Brans A."/>
            <person name="Braun M."/>
            <person name="Brignell S.C."/>
            <person name="Bron S."/>
            <person name="Brouillet S."/>
            <person name="Bruschi C.V."/>
            <person name="Caldwell B."/>
            <person name="Capuano V."/>
            <person name="Carter N.M."/>
            <person name="Choi S.-K."/>
            <person name="Codani J.-J."/>
            <person name="Connerton I.F."/>
            <person name="Cummings N.J."/>
            <person name="Daniel R.A."/>
            <person name="Denizot F."/>
            <person name="Devine K.M."/>
            <person name="Duesterhoeft A."/>
            <person name="Ehrlich S.D."/>
            <person name="Emmerson P.T."/>
            <person name="Entian K.-D."/>
            <person name="Errington J."/>
            <person name="Fabret C."/>
            <person name="Ferrari E."/>
            <person name="Foulger D."/>
            <person name="Fritz C."/>
            <person name="Fujita M."/>
            <person name="Fujita Y."/>
            <person name="Fuma S."/>
            <person name="Galizzi A."/>
            <person name="Galleron N."/>
            <person name="Ghim S.-Y."/>
            <person name="Glaser P."/>
            <person name="Goffeau A."/>
            <person name="Golightly E.J."/>
            <person name="Grandi G."/>
            <person name="Guiseppi G."/>
            <person name="Guy B.J."/>
            <person name="Haga K."/>
            <person name="Haiech J."/>
            <person name="Harwood C.R."/>
            <person name="Henaut A."/>
            <person name="Hilbert H."/>
            <person name="Holsappel S."/>
            <person name="Hosono S."/>
            <person name="Hullo M.-F."/>
            <person name="Itaya M."/>
            <person name="Jones L.-M."/>
            <person name="Joris B."/>
            <person name="Karamata D."/>
            <person name="Kasahara Y."/>
            <person name="Klaerr-Blanchard M."/>
            <person name="Klein C."/>
            <person name="Kobayashi Y."/>
            <person name="Koetter P."/>
            <person name="Koningstein G."/>
            <person name="Krogh S."/>
            <person name="Kumano M."/>
            <person name="Kurita K."/>
            <person name="Lapidus A."/>
            <person name="Lardinois S."/>
            <person name="Lauber J."/>
            <person name="Lazarevic V."/>
            <person name="Lee S.-M."/>
            <person name="Levine A."/>
            <person name="Liu H."/>
            <person name="Masuda S."/>
            <person name="Mauel C."/>
            <person name="Medigue C."/>
            <person name="Medina N."/>
            <person name="Mellado R.P."/>
            <person name="Mizuno M."/>
            <person name="Moestl D."/>
            <person name="Nakai S."/>
            <person name="Noback M."/>
            <person name="Noone D."/>
            <person name="O'Reilly M."/>
            <person name="Ogawa K."/>
            <person name="Ogiwara A."/>
            <person name="Oudega B."/>
            <person name="Park S.-H."/>
            <person name="Parro V."/>
            <person name="Pohl T.M."/>
            <person name="Portetelle D."/>
            <person name="Porwollik S."/>
            <person name="Prescott A.M."/>
            <person name="Presecan E."/>
            <person name="Pujic P."/>
            <person name="Purnelle B."/>
            <person name="Rapoport G."/>
            <person name="Rey M."/>
            <person name="Reynolds S."/>
            <person name="Rieger M."/>
            <person name="Rivolta C."/>
            <person name="Rocha E."/>
            <person name="Roche B."/>
            <person name="Rose M."/>
            <person name="Sadaie Y."/>
            <person name="Sato T."/>
            <person name="Scanlan E."/>
            <person name="Schleich S."/>
            <person name="Schroeter R."/>
            <person name="Scoffone F."/>
            <person name="Sekiguchi J."/>
            <person name="Sekowska A."/>
            <person name="Seror S.J."/>
            <person name="Serror P."/>
            <person name="Shin B.-S."/>
            <person name="Soldo B."/>
            <person name="Sorokin A."/>
            <person name="Tacconi E."/>
            <person name="Takagi T."/>
            <person name="Takahashi H."/>
            <person name="Takemaru K."/>
            <person name="Takeuchi M."/>
            <person name="Tamakoshi A."/>
            <person name="Tanaka T."/>
            <person name="Terpstra P."/>
            <person name="Tognoni A."/>
            <person name="Tosato V."/>
            <person name="Uchiyama S."/>
            <person name="Vandenbol M."/>
            <person name="Vannier F."/>
            <person name="Vassarotti A."/>
            <person name="Viari A."/>
            <person name="Wambutt R."/>
            <person name="Wedler E."/>
            <person name="Wedler H."/>
            <person name="Weitzenegger T."/>
            <person name="Winters P."/>
            <person name="Wipat A."/>
            <person name="Yamamoto H."/>
            <person name="Yamane K."/>
            <person name="Yasumoto K."/>
            <person name="Yata K."/>
            <person name="Yoshida K."/>
            <person name="Yoshikawa H.-F."/>
            <person name="Zumstein E."/>
            <person name="Yoshikawa H."/>
            <person name="Danchin A."/>
        </authorList>
    </citation>
    <scope>NUCLEOTIDE SEQUENCE [LARGE SCALE GENOMIC DNA]</scope>
    <source>
        <strain>168</strain>
    </source>
</reference>
<accession>P94483</accession>
<accession>Q796H7</accession>
<keyword id="KW-1185">Reference proteome</keyword>
<feature type="chain" id="PRO_0000360447" description="Uncharacterized protein YnaE">
    <location>
        <begin position="1"/>
        <end position="213"/>
    </location>
</feature>
<gene>
    <name type="primary">ynaE</name>
    <name type="ordered locus">BSU17530</name>
</gene>
<proteinExistence type="predicted"/>
<protein>
    <recommendedName>
        <fullName>Uncharacterized protein YnaE</fullName>
    </recommendedName>
</protein>